<keyword id="KW-0328">Glycosyltransferase</keyword>
<keyword id="KW-1185">Reference proteome</keyword>
<keyword id="KW-0808">Transferase</keyword>
<name>U72E2_ARATH</name>
<gene>
    <name evidence="9" type="primary">UGT72E2</name>
    <name evidence="11" type="ordered locus">At5g66690</name>
    <name evidence="12" type="ORF">MSN2.8</name>
</gene>
<protein>
    <recommendedName>
        <fullName evidence="9">UDP-glycosyltransferase 72E2</fullName>
        <ecNumber evidence="3 5 6 7 8">2.4.1.111</ecNumber>
    </recommendedName>
    <alternativeName>
        <fullName evidence="10">Hydroxycinnamate 4-beta-glucosyltransferase UGT72E2</fullName>
        <ecNumber evidence="3 5 6 7 8">2.4.1.126</ecNumber>
    </alternativeName>
</protein>
<evidence type="ECO:0000250" key="1">
    <source>
        <dbReference type="UniProtKB" id="A0A0A1HA03"/>
    </source>
</evidence>
<evidence type="ECO:0000250" key="2">
    <source>
        <dbReference type="UniProtKB" id="P51094"/>
    </source>
</evidence>
<evidence type="ECO:0000269" key="3">
    <source>
    </source>
</evidence>
<evidence type="ECO:0000269" key="4">
    <source>
    </source>
</evidence>
<evidence type="ECO:0000269" key="5">
    <source>
    </source>
</evidence>
<evidence type="ECO:0000269" key="6">
    <source>
    </source>
</evidence>
<evidence type="ECO:0000269" key="7">
    <source>
    </source>
</evidence>
<evidence type="ECO:0000269" key="8">
    <source>
    </source>
</evidence>
<evidence type="ECO:0000303" key="9">
    <source>
    </source>
</evidence>
<evidence type="ECO:0000305" key="10"/>
<evidence type="ECO:0000312" key="11">
    <source>
        <dbReference type="Araport" id="AT5G66690"/>
    </source>
</evidence>
<evidence type="ECO:0000312" key="12">
    <source>
        <dbReference type="EMBL" id="BAA97275.1"/>
    </source>
</evidence>
<reference key="1">
    <citation type="journal article" date="2000" name="DNA Res.">
        <title>Structural analysis of Arabidopsis thaliana chromosome 5. X. Sequence features of the regions of 3,076,755 bp covered by sixty P1 and TAC clones.</title>
        <authorList>
            <person name="Sato S."/>
            <person name="Nakamura Y."/>
            <person name="Kaneko T."/>
            <person name="Katoh T."/>
            <person name="Asamizu E."/>
            <person name="Kotani H."/>
            <person name="Tabata S."/>
        </authorList>
    </citation>
    <scope>NUCLEOTIDE SEQUENCE [LARGE SCALE GENOMIC DNA]</scope>
    <source>
        <strain>cv. Columbia</strain>
    </source>
</reference>
<reference key="2">
    <citation type="journal article" date="2017" name="Plant J.">
        <title>Araport11: a complete reannotation of the Arabidopsis thaliana reference genome.</title>
        <authorList>
            <person name="Cheng C.Y."/>
            <person name="Krishnakumar V."/>
            <person name="Chan A.P."/>
            <person name="Thibaud-Nissen F."/>
            <person name="Schobel S."/>
            <person name="Town C.D."/>
        </authorList>
    </citation>
    <scope>GENOME REANNOTATION</scope>
    <source>
        <strain>cv. Columbia</strain>
    </source>
</reference>
<reference key="3">
    <citation type="journal article" date="2003" name="Science">
        <title>Empirical analysis of transcriptional activity in the Arabidopsis genome.</title>
        <authorList>
            <person name="Yamada K."/>
            <person name="Lim J."/>
            <person name="Dale J.M."/>
            <person name="Chen H."/>
            <person name="Shinn P."/>
            <person name="Palm C.J."/>
            <person name="Southwick A.M."/>
            <person name="Wu H.C."/>
            <person name="Kim C.J."/>
            <person name="Nguyen M."/>
            <person name="Pham P.K."/>
            <person name="Cheuk R.F."/>
            <person name="Karlin-Newmann G."/>
            <person name="Liu S.X."/>
            <person name="Lam B."/>
            <person name="Sakano H."/>
            <person name="Wu T."/>
            <person name="Yu G."/>
            <person name="Miranda M."/>
            <person name="Quach H.L."/>
            <person name="Tripp M."/>
            <person name="Chang C.H."/>
            <person name="Lee J.M."/>
            <person name="Toriumi M.J."/>
            <person name="Chan M.M."/>
            <person name="Tang C.C."/>
            <person name="Onodera C.S."/>
            <person name="Deng J.M."/>
            <person name="Akiyama K."/>
            <person name="Ansari Y."/>
            <person name="Arakawa T."/>
            <person name="Banh J."/>
            <person name="Banno F."/>
            <person name="Bowser L."/>
            <person name="Brooks S.Y."/>
            <person name="Carninci P."/>
            <person name="Chao Q."/>
            <person name="Choy N."/>
            <person name="Enju A."/>
            <person name="Goldsmith A.D."/>
            <person name="Gurjal M."/>
            <person name="Hansen N.F."/>
            <person name="Hayashizaki Y."/>
            <person name="Johnson-Hopson C."/>
            <person name="Hsuan V.W."/>
            <person name="Iida K."/>
            <person name="Karnes M."/>
            <person name="Khan S."/>
            <person name="Koesema E."/>
            <person name="Ishida J."/>
            <person name="Jiang P.X."/>
            <person name="Jones T."/>
            <person name="Kawai J."/>
            <person name="Kamiya A."/>
            <person name="Meyers C."/>
            <person name="Nakajima M."/>
            <person name="Narusaka M."/>
            <person name="Seki M."/>
            <person name="Sakurai T."/>
            <person name="Satou M."/>
            <person name="Tamse R."/>
            <person name="Vaysberg M."/>
            <person name="Wallender E.K."/>
            <person name="Wong C."/>
            <person name="Yamamura Y."/>
            <person name="Yuan S."/>
            <person name="Shinozaki K."/>
            <person name="Davis R.W."/>
            <person name="Theologis A."/>
            <person name="Ecker J.R."/>
        </authorList>
    </citation>
    <scope>NUCLEOTIDE SEQUENCE [LARGE SCALE MRNA]</scope>
    <source>
        <strain>cv. Columbia</strain>
    </source>
</reference>
<reference key="4">
    <citation type="submission" date="2002-03" db="EMBL/GenBank/DDBJ databases">
        <title>Full-length cDNA from Arabidopsis thaliana.</title>
        <authorList>
            <person name="Brover V.V."/>
            <person name="Troukhan M.E."/>
            <person name="Alexandrov N.A."/>
            <person name="Lu Y.-P."/>
            <person name="Flavell R.B."/>
            <person name="Feldmann K.A."/>
        </authorList>
    </citation>
    <scope>NUCLEOTIDE SEQUENCE [LARGE SCALE MRNA]</scope>
</reference>
<reference key="5">
    <citation type="journal article" date="2001" name="J. Biol. Chem.">
        <title>Phylogenetic analysis of the UDP-glycosyltransferase multigene family of Arabidopsis thaliana.</title>
        <authorList>
            <person name="Li Y."/>
            <person name="Baldauf S."/>
            <person name="Lim E.K."/>
            <person name="Bowles D.J."/>
        </authorList>
    </citation>
    <scope>GENE FAMILY</scope>
</reference>
<reference key="6">
    <citation type="journal article" date="2001" name="J. Biol. Chem.">
        <title>Identification of glucosyltransferase genes involved in sinapate metabolism and lignin synthesis in Arabidopsis.</title>
        <authorList>
            <person name="Lim E.K."/>
            <person name="Li Y."/>
            <person name="Parr A."/>
            <person name="Jackson R."/>
            <person name="Ashford D.A."/>
            <person name="Bowles D.J."/>
        </authorList>
    </citation>
    <scope>FUNCTION</scope>
    <scope>CATALYTIC ACTIVITY</scope>
    <scope>BIOPHYSICOCHEMICAL PROPERTIES</scope>
</reference>
<reference key="7">
    <citation type="journal article" date="2003" name="Planta">
        <title>Arabidopsis glucosyltransferases with activities toward both endogenous and xenobiotic substrates.</title>
        <authorList>
            <person name="Messner B."/>
            <person name="Thulke O."/>
            <person name="Schaeffner A.R."/>
        </authorList>
    </citation>
    <scope>FUNCTION</scope>
    <scope>CATALYTIC ACTIVITY</scope>
</reference>
<reference key="8">
    <citation type="journal article" date="2005" name="FEBS Lett.">
        <title>Identification and characterisation of Arabidopsis glycosyltransferases capable of glucosylating coniferyl aldehyde and sinapyl aldehyde.</title>
        <authorList>
            <person name="Lim E.K."/>
            <person name="Jackson R.G."/>
            <person name="Bowles D.J."/>
        </authorList>
    </citation>
    <scope>FUNCTION</scope>
    <scope>CATALYTIC ACTIVITY</scope>
    <scope>BIOPHYSICOCHEMICAL PROPERTIES</scope>
</reference>
<reference key="9">
    <citation type="journal article" date="2006" name="Plant J.">
        <title>The glucosyltransferase UGT72E2 is responsible for monolignol 4-O-glucoside production in Arabidopsis thaliana.</title>
        <authorList>
            <person name="Lanot A."/>
            <person name="Hodge D."/>
            <person name="Jackson R.G."/>
            <person name="George G.L."/>
            <person name="Elias L."/>
            <person name="Lim E.K."/>
            <person name="Vaistij F.E."/>
            <person name="Bowles D.J."/>
        </authorList>
    </citation>
    <scope>FUNCTION</scope>
    <scope>CATALYTIC ACTIVITY</scope>
    <scope>TISSUE SPECIFICITY</scope>
</reference>
<reference key="10">
    <citation type="journal article" date="2010" name="Proc. Natl. Acad. Sci. U.S.A.">
        <title>ATP-binding cassette-like transporters are involved in the transport of lignin precursors across plasma and vacuolar membranes.</title>
        <authorList>
            <person name="Miao Y.C."/>
            <person name="Liu C.J."/>
        </authorList>
    </citation>
    <scope>FUNCTION</scope>
    <scope>CATALYTIC ACTIVITY</scope>
</reference>
<reference key="11">
    <citation type="journal article" date="2014" name="Phytochemistry">
        <title>Enzymatic and metabolic engineering for efficient production of syringin, sinapyl alcohol 4-O-glucoside, in Arabidopsis thaliana.</title>
        <authorList>
            <person name="Chu Y."/>
            <person name="Kwon T."/>
            <person name="Nam J."/>
        </authorList>
    </citation>
    <scope>FUNCTION</scope>
    <scope>CATALYTIC ACTIVITY</scope>
</reference>
<accession>Q9LVR1</accession>
<accession>Q8LEG2</accession>
<proteinExistence type="evidence at protein level"/>
<organism>
    <name type="scientific">Arabidopsis thaliana</name>
    <name type="common">Mouse-ear cress</name>
    <dbReference type="NCBI Taxonomy" id="3702"/>
    <lineage>
        <taxon>Eukaryota</taxon>
        <taxon>Viridiplantae</taxon>
        <taxon>Streptophyta</taxon>
        <taxon>Embryophyta</taxon>
        <taxon>Tracheophyta</taxon>
        <taxon>Spermatophyta</taxon>
        <taxon>Magnoliopsida</taxon>
        <taxon>eudicotyledons</taxon>
        <taxon>Gunneridae</taxon>
        <taxon>Pentapetalae</taxon>
        <taxon>rosids</taxon>
        <taxon>malvids</taxon>
        <taxon>Brassicales</taxon>
        <taxon>Brassicaceae</taxon>
        <taxon>Camelineae</taxon>
        <taxon>Arabidopsis</taxon>
    </lineage>
</organism>
<comment type="function">
    <text evidence="3 4 5 6 7 8">Involved in the O-glucosylation of monolignols (alcohol monomers of lignin) (PubMed:11042211, PubMed:15907484, PubMed:16995900, PubMed:21149736, PubMed:24667164). Glucosylates coniferyl alcohol to form coniferyl alcohol 4-O-glucoside (PubMed:11042211, PubMed:15907484, PubMed:16995900, PubMed:21149736, PubMed:24667164). Glucosylates sinapyl alcohol to form sinapyl alcohol 4-O-glucoside (PubMed:11042211, PubMed:12721858, PubMed:15907484, PubMed:21149736, PubMed:24667164). Glucosylates coniferyl aldehyde to form coniferyl aldehyde 4-O-glucoside (PubMed:15907484). Glucosylates sinapyl aldehyde to form sinapyl aldehyde 4-O-glucoside (PubMed:15907484). Possesses low activity with sinapate and ferulate as substrates (PubMed:11042211, PubMed:15907484).</text>
</comment>
<comment type="catalytic activity">
    <reaction evidence="3 5 6 7 8">
        <text>(E)-4-coumarate + UDP-alpha-D-glucose = 4-O-(beta-D-glucosyl)-trans-4-coumarate + UDP + H(+)</text>
        <dbReference type="Rhea" id="RHEA:21636"/>
        <dbReference type="ChEBI" id="CHEBI:12876"/>
        <dbReference type="ChEBI" id="CHEBI:15378"/>
        <dbReference type="ChEBI" id="CHEBI:58223"/>
        <dbReference type="ChEBI" id="CHEBI:58885"/>
        <dbReference type="ChEBI" id="CHEBI:79066"/>
        <dbReference type="EC" id="2.4.1.126"/>
    </reaction>
</comment>
<comment type="catalytic activity">
    <reaction evidence="3 5 6 7 8">
        <text>(E)-coniferol + UDP-alpha-D-glucose = 4-O-(beta-D-glucosyl)-(E)-coniferol + UDP + H(+)</text>
        <dbReference type="Rhea" id="RHEA:23944"/>
        <dbReference type="ChEBI" id="CHEBI:15378"/>
        <dbReference type="ChEBI" id="CHEBI:16220"/>
        <dbReference type="ChEBI" id="CHEBI:17745"/>
        <dbReference type="ChEBI" id="CHEBI:58223"/>
        <dbReference type="ChEBI" id="CHEBI:58885"/>
        <dbReference type="EC" id="2.4.1.111"/>
    </reaction>
</comment>
<comment type="catalytic activity">
    <reaction evidence="3 4 5 6 7 8">
        <text>(E)-sinapyl alcohol + UDP-alpha-D-glucose = 4-O-(beta-D-glucosyl)-trans-4-sinapoyl alcohol + UDP + H(+)</text>
        <dbReference type="Rhea" id="RHEA:57460"/>
        <dbReference type="ChEBI" id="CHEBI:9380"/>
        <dbReference type="ChEBI" id="CHEBI:15378"/>
        <dbReference type="ChEBI" id="CHEBI:58223"/>
        <dbReference type="ChEBI" id="CHEBI:58885"/>
        <dbReference type="ChEBI" id="CHEBI:64557"/>
    </reaction>
</comment>
<comment type="catalytic activity">
    <reaction evidence="3">
        <text>(E)-sinapate + UDP-alpha-D-glucose = 4-O-(beta-D-glucosyl)-trans-sinapate + UDP + H(+)</text>
        <dbReference type="Rhea" id="RHEA:57456"/>
        <dbReference type="ChEBI" id="CHEBI:15378"/>
        <dbReference type="ChEBI" id="CHEBI:30023"/>
        <dbReference type="ChEBI" id="CHEBI:58223"/>
        <dbReference type="ChEBI" id="CHEBI:58885"/>
        <dbReference type="ChEBI" id="CHEBI:141763"/>
    </reaction>
</comment>
<comment type="catalytic activity">
    <reaction evidence="5">
        <text>(E)-coniferaldehyde + UDP-alpha-D-glucose = 4-O-(beta-D-glucosyl)-4-(E)-coniferyl aldehyde + UDP + H(+)</text>
        <dbReference type="Rhea" id="RHEA:57708"/>
        <dbReference type="ChEBI" id="CHEBI:15378"/>
        <dbReference type="ChEBI" id="CHEBI:16547"/>
        <dbReference type="ChEBI" id="CHEBI:58223"/>
        <dbReference type="ChEBI" id="CHEBI:58885"/>
        <dbReference type="ChEBI" id="CHEBI:136949"/>
    </reaction>
</comment>
<comment type="catalytic activity">
    <reaction evidence="5">
        <text>(E)-sinapaldehyde + UDP-alpha-D-glucose = 4-O-(beta-D-glucosyl)-4-trans-sinapoyl aldehyde + UDP + H(+)</text>
        <dbReference type="Rhea" id="RHEA:57712"/>
        <dbReference type="ChEBI" id="CHEBI:15378"/>
        <dbReference type="ChEBI" id="CHEBI:27949"/>
        <dbReference type="ChEBI" id="CHEBI:58223"/>
        <dbReference type="ChEBI" id="CHEBI:58885"/>
        <dbReference type="ChEBI" id="CHEBI:142126"/>
    </reaction>
</comment>
<comment type="biophysicochemical properties">
    <kinetics>
        <KM evidence="5">20 uM for coniferyl aldehyde</KM>
        <KM evidence="5">20 uM for sinapyl aldehyde</KM>
        <KM evidence="5">60 uM for coniferyl alcohol</KM>
        <KM evidence="5">150 uM for sinapyl alcohol</KM>
        <KM evidence="3">260 uM for coniferyl alcohol</KM>
        <KM evidence="3">240 uM for sinapyl alcohol</KM>
        <KM evidence="3">450 uM for ferulate</KM>
        <KM evidence="3">900 uM for sinapate</KM>
    </kinetics>
</comment>
<comment type="tissue specificity">
    <text evidence="6">Expressed in seedlings and roots.</text>
</comment>
<comment type="miscellaneous">
    <text evidence="6">Plants overexpressing UGT72E2 show increased accumulation of monolignol glucosides in roots and appearance of these glucosides in leaves.</text>
</comment>
<comment type="similarity">
    <text evidence="10">Belongs to the UDP-glycosyltransferase family.</text>
</comment>
<comment type="sequence caution" evidence="10">
    <conflict type="erroneous initiation">
        <sequence resource="EMBL-CDS" id="AAM62659"/>
    </conflict>
    <text>Truncated N-terminus.</text>
</comment>
<feature type="chain" id="PRO_0000409074" description="UDP-glycosyltransferase 72E2">
    <location>
        <begin position="1"/>
        <end position="481"/>
    </location>
</feature>
<feature type="active site" description="Proton acceptor" evidence="1">
    <location>
        <position position="18"/>
    </location>
</feature>
<feature type="active site" description="Charge relay" evidence="1">
    <location>
        <position position="111"/>
    </location>
</feature>
<feature type="binding site" evidence="2">
    <location>
        <position position="18"/>
    </location>
    <ligand>
        <name>an anthocyanidin</name>
        <dbReference type="ChEBI" id="CHEBI:143576"/>
    </ligand>
</feature>
<feature type="binding site" evidence="1">
    <location>
        <position position="346"/>
    </location>
    <ligand>
        <name>UDP-alpha-D-glucose</name>
        <dbReference type="ChEBI" id="CHEBI:58885"/>
    </ligand>
</feature>
<feature type="binding site" evidence="1">
    <location>
        <position position="348"/>
    </location>
    <ligand>
        <name>UDP-alpha-D-glucose</name>
        <dbReference type="ChEBI" id="CHEBI:58885"/>
    </ligand>
</feature>
<feature type="binding site" evidence="1">
    <location>
        <position position="363"/>
    </location>
    <ligand>
        <name>UDP-alpha-D-glucose</name>
        <dbReference type="ChEBI" id="CHEBI:58885"/>
    </ligand>
</feature>
<feature type="binding site" evidence="1">
    <location>
        <position position="366"/>
    </location>
    <ligand>
        <name>UDP-alpha-D-glucose</name>
        <dbReference type="ChEBI" id="CHEBI:58885"/>
    </ligand>
</feature>
<feature type="binding site" evidence="1">
    <location>
        <position position="368"/>
    </location>
    <ligand>
        <name>UDP-alpha-D-glucose</name>
        <dbReference type="ChEBI" id="CHEBI:58885"/>
    </ligand>
</feature>
<feature type="binding site" evidence="1">
    <location>
        <position position="371"/>
    </location>
    <ligand>
        <name>UDP-alpha-D-glucose</name>
        <dbReference type="ChEBI" id="CHEBI:58885"/>
    </ligand>
</feature>
<feature type="binding site" evidence="2">
    <location>
        <position position="386"/>
    </location>
    <ligand>
        <name>an anthocyanidin</name>
        <dbReference type="ChEBI" id="CHEBI:143576"/>
    </ligand>
</feature>
<feature type="binding site" evidence="1">
    <location>
        <position position="387"/>
    </location>
    <ligand>
        <name>UDP-alpha-D-glucose</name>
        <dbReference type="ChEBI" id="CHEBI:58885"/>
    </ligand>
</feature>
<feature type="binding site" evidence="1">
    <location>
        <position position="388"/>
    </location>
    <ligand>
        <name>UDP-alpha-D-glucose</name>
        <dbReference type="ChEBI" id="CHEBI:58885"/>
    </ligand>
</feature>
<feature type="sequence conflict" description="In Ref. 4; AAM62659." evidence="10" ref="4">
    <original>I</original>
    <variation>N</variation>
    <location>
        <position position="3"/>
    </location>
</feature>
<sequence>MHITKPHAAMFSSPGMGHVIPVIELGKRLSANNGFHVTVFVLETDAASAQSKFLNSTGVDIVKLPSPDIYGLVDPDDHVVTKIGVIMRAAVPALRSKIAAMHQKPTALIVDLFGTDALCLAKEFNMLSYVFIPTNARFLGVSIYYPNLDKDIKEEHTVQRNPLAIPGCEPVRFEDTLDAYLVPDEPVYRDFVRHGLAYPKADGILVNTWEEMEPKSLKSLLNPKLLGRVARVPVYPIGPLCRPIQSSETDHPVLDWLNEQPNESVLYISFGSGGCLSAKQLTELAWGLEQSQQRFVWVVRPPVDGSCCSEYVSANGGGTEDNTPEYLPEGFVSRTSDRGFVVPSWAPQAEILSHRAVGGFLTHCGWSSTLESVVGGVPMIAWPLFAEQNMNAALLSDELGIAVRLDDPKEDISRWKIEALVRKVMTEKEGEAMRRKVKKLRDSAEMSLSIDGGGLAHESLCRVTKECQRFLERVVDLSRGA</sequence>
<dbReference type="EC" id="2.4.1.111" evidence="3 5 6 7 8"/>
<dbReference type="EC" id="2.4.1.126" evidence="3 5 6 7 8"/>
<dbReference type="EMBL" id="AB018119">
    <property type="protein sequence ID" value="BAA97275.1"/>
    <property type="molecule type" value="Genomic_DNA"/>
</dbReference>
<dbReference type="EMBL" id="CP002688">
    <property type="protein sequence ID" value="AED98252.1"/>
    <property type="molecule type" value="Genomic_DNA"/>
</dbReference>
<dbReference type="EMBL" id="AY062636">
    <property type="protein sequence ID" value="AAL32714.1"/>
    <property type="molecule type" value="mRNA"/>
</dbReference>
<dbReference type="EMBL" id="AY064651">
    <property type="protein sequence ID" value="AAL47362.1"/>
    <property type="molecule type" value="mRNA"/>
</dbReference>
<dbReference type="EMBL" id="AY085432">
    <property type="protein sequence ID" value="AAM62659.1"/>
    <property type="status" value="ALT_INIT"/>
    <property type="molecule type" value="mRNA"/>
</dbReference>
<dbReference type="RefSeq" id="NP_201470.1">
    <property type="nucleotide sequence ID" value="NM_126067.3"/>
</dbReference>
<dbReference type="SMR" id="Q9LVR1"/>
<dbReference type="FunCoup" id="Q9LVR1">
    <property type="interactions" value="392"/>
</dbReference>
<dbReference type="STRING" id="3702.Q9LVR1"/>
<dbReference type="CAZy" id="GT1">
    <property type="family name" value="Glycosyltransferase Family 1"/>
</dbReference>
<dbReference type="PaxDb" id="3702-AT5G66690.1"/>
<dbReference type="ProteomicsDB" id="228589"/>
<dbReference type="EnsemblPlants" id="AT5G66690.1">
    <property type="protein sequence ID" value="AT5G66690.1"/>
    <property type="gene ID" value="AT5G66690"/>
</dbReference>
<dbReference type="GeneID" id="836802"/>
<dbReference type="Gramene" id="AT5G66690.1">
    <property type="protein sequence ID" value="AT5G66690.1"/>
    <property type="gene ID" value="AT5G66690"/>
</dbReference>
<dbReference type="KEGG" id="ath:AT5G66690"/>
<dbReference type="Araport" id="AT5G66690"/>
<dbReference type="TAIR" id="AT5G66690">
    <property type="gene designation" value="UGT72E2"/>
</dbReference>
<dbReference type="eggNOG" id="KOG1192">
    <property type="taxonomic scope" value="Eukaryota"/>
</dbReference>
<dbReference type="HOGENOM" id="CLU_001724_3_2_1"/>
<dbReference type="InParanoid" id="Q9LVR1"/>
<dbReference type="OMA" id="MENWILK"/>
<dbReference type="OrthoDB" id="5835829at2759"/>
<dbReference type="PhylomeDB" id="Q9LVR1"/>
<dbReference type="BioCyc" id="ARA:AT5G66690-MONOMER"/>
<dbReference type="BioCyc" id="MetaCyc:AT5G66690-MONOMER"/>
<dbReference type="SABIO-RK" id="Q9LVR1"/>
<dbReference type="PRO" id="PR:Q9LVR1"/>
<dbReference type="Proteomes" id="UP000006548">
    <property type="component" value="Chromosome 5"/>
</dbReference>
<dbReference type="ExpressionAtlas" id="Q9LVR1">
    <property type="expression patterns" value="baseline and differential"/>
</dbReference>
<dbReference type="GO" id="GO:0047209">
    <property type="term" value="F:coniferyl-alcohol glucosyltransferase activity"/>
    <property type="evidence" value="ECO:0000314"/>
    <property type="project" value="TAIR"/>
</dbReference>
<dbReference type="GO" id="GO:0047218">
    <property type="term" value="F:hydroxycinnamate 4-beta-glucosyltransferase activity"/>
    <property type="evidence" value="ECO:0007669"/>
    <property type="project" value="UniProtKB-EC"/>
</dbReference>
<dbReference type="GO" id="GO:0009808">
    <property type="term" value="P:lignin metabolic process"/>
    <property type="evidence" value="ECO:0000304"/>
    <property type="project" value="TAIR"/>
</dbReference>
<dbReference type="CDD" id="cd03784">
    <property type="entry name" value="GT1_Gtf-like"/>
    <property type="match status" value="1"/>
</dbReference>
<dbReference type="FunFam" id="3.40.50.2000:FF:000051">
    <property type="entry name" value="Glycosyltransferase"/>
    <property type="match status" value="1"/>
</dbReference>
<dbReference type="FunFam" id="3.40.50.2000:FF:000054">
    <property type="entry name" value="Glycosyltransferase"/>
    <property type="match status" value="1"/>
</dbReference>
<dbReference type="Gene3D" id="3.40.50.2000">
    <property type="entry name" value="Glycogen Phosphorylase B"/>
    <property type="match status" value="2"/>
</dbReference>
<dbReference type="InterPro" id="IPR002213">
    <property type="entry name" value="UDP_glucos_trans"/>
</dbReference>
<dbReference type="InterPro" id="IPR035595">
    <property type="entry name" value="UDP_glycos_trans_CS"/>
</dbReference>
<dbReference type="PANTHER" id="PTHR48046">
    <property type="entry name" value="UDP-GLYCOSYLTRANSFERASE 72E1"/>
    <property type="match status" value="1"/>
</dbReference>
<dbReference type="PANTHER" id="PTHR48046:SF5">
    <property type="entry name" value="UDP-GLYCOSYLTRANSFERASE 72E2-RELATED"/>
    <property type="match status" value="1"/>
</dbReference>
<dbReference type="Pfam" id="PF00201">
    <property type="entry name" value="UDPGT"/>
    <property type="match status" value="1"/>
</dbReference>
<dbReference type="SUPFAM" id="SSF53756">
    <property type="entry name" value="UDP-Glycosyltransferase/glycogen phosphorylase"/>
    <property type="match status" value="1"/>
</dbReference>
<dbReference type="PROSITE" id="PS00375">
    <property type="entry name" value="UDPGT"/>
    <property type="match status" value="1"/>
</dbReference>